<gene>
    <name evidence="1" type="primary">dut</name>
    <name type="ordered locus">Wbm0355</name>
</gene>
<dbReference type="EC" id="3.6.1.23" evidence="1"/>
<dbReference type="EMBL" id="AE017321">
    <property type="protein sequence ID" value="AAW70943.1"/>
    <property type="molecule type" value="Genomic_DNA"/>
</dbReference>
<dbReference type="SMR" id="Q5GST1"/>
<dbReference type="STRING" id="292805.Wbm0355"/>
<dbReference type="KEGG" id="wbm:Wbm0355"/>
<dbReference type="eggNOG" id="COG0756">
    <property type="taxonomic scope" value="Bacteria"/>
</dbReference>
<dbReference type="HOGENOM" id="CLU_068508_1_2_5"/>
<dbReference type="UniPathway" id="UPA00610">
    <property type="reaction ID" value="UER00666"/>
</dbReference>
<dbReference type="Proteomes" id="UP000000534">
    <property type="component" value="Chromosome"/>
</dbReference>
<dbReference type="GO" id="GO:0004170">
    <property type="term" value="F:dUTP diphosphatase activity"/>
    <property type="evidence" value="ECO:0007669"/>
    <property type="project" value="UniProtKB-UniRule"/>
</dbReference>
<dbReference type="GO" id="GO:0000287">
    <property type="term" value="F:magnesium ion binding"/>
    <property type="evidence" value="ECO:0007669"/>
    <property type="project" value="UniProtKB-UniRule"/>
</dbReference>
<dbReference type="GO" id="GO:0006226">
    <property type="term" value="P:dUMP biosynthetic process"/>
    <property type="evidence" value="ECO:0007669"/>
    <property type="project" value="UniProtKB-UniRule"/>
</dbReference>
<dbReference type="GO" id="GO:0046081">
    <property type="term" value="P:dUTP catabolic process"/>
    <property type="evidence" value="ECO:0007669"/>
    <property type="project" value="InterPro"/>
</dbReference>
<dbReference type="CDD" id="cd07557">
    <property type="entry name" value="trimeric_dUTPase"/>
    <property type="match status" value="1"/>
</dbReference>
<dbReference type="FunFam" id="2.70.40.10:FF:000002">
    <property type="entry name" value="dUTP diphosphatase"/>
    <property type="match status" value="1"/>
</dbReference>
<dbReference type="Gene3D" id="2.70.40.10">
    <property type="match status" value="1"/>
</dbReference>
<dbReference type="HAMAP" id="MF_00116">
    <property type="entry name" value="dUTPase_bact"/>
    <property type="match status" value="1"/>
</dbReference>
<dbReference type="InterPro" id="IPR008181">
    <property type="entry name" value="dUTPase"/>
</dbReference>
<dbReference type="InterPro" id="IPR029054">
    <property type="entry name" value="dUTPase-like"/>
</dbReference>
<dbReference type="InterPro" id="IPR036157">
    <property type="entry name" value="dUTPase-like_sf"/>
</dbReference>
<dbReference type="InterPro" id="IPR033704">
    <property type="entry name" value="dUTPase_trimeric"/>
</dbReference>
<dbReference type="NCBIfam" id="TIGR00576">
    <property type="entry name" value="dut"/>
    <property type="match status" value="1"/>
</dbReference>
<dbReference type="NCBIfam" id="NF001862">
    <property type="entry name" value="PRK00601.1"/>
    <property type="match status" value="1"/>
</dbReference>
<dbReference type="PANTHER" id="PTHR11241">
    <property type="entry name" value="DEOXYURIDINE 5'-TRIPHOSPHATE NUCLEOTIDOHYDROLASE"/>
    <property type="match status" value="1"/>
</dbReference>
<dbReference type="PANTHER" id="PTHR11241:SF0">
    <property type="entry name" value="DEOXYURIDINE 5'-TRIPHOSPHATE NUCLEOTIDOHYDROLASE"/>
    <property type="match status" value="1"/>
</dbReference>
<dbReference type="Pfam" id="PF00692">
    <property type="entry name" value="dUTPase"/>
    <property type="match status" value="1"/>
</dbReference>
<dbReference type="SUPFAM" id="SSF51283">
    <property type="entry name" value="dUTPase-like"/>
    <property type="match status" value="1"/>
</dbReference>
<accession>Q5GST1</accession>
<evidence type="ECO:0000255" key="1">
    <source>
        <dbReference type="HAMAP-Rule" id="MF_00116"/>
    </source>
</evidence>
<name>DUT_WOLTR</name>
<proteinExistence type="inferred from homology"/>
<keyword id="KW-0378">Hydrolase</keyword>
<keyword id="KW-0460">Magnesium</keyword>
<keyword id="KW-0479">Metal-binding</keyword>
<keyword id="KW-0546">Nucleotide metabolism</keyword>
<keyword id="KW-1185">Reference proteome</keyword>
<protein>
    <recommendedName>
        <fullName evidence="1">Deoxyuridine 5'-triphosphate nucleotidohydrolase</fullName>
        <shortName evidence="1">dUTPase</shortName>
        <ecNumber evidence="1">3.6.1.23</ecNumber>
    </recommendedName>
    <alternativeName>
        <fullName evidence="1">dUTP pyrophosphatase</fullName>
    </alternativeName>
</protein>
<comment type="function">
    <text evidence="1">This enzyme is involved in nucleotide metabolism: it produces dUMP, the immediate precursor of thymidine nucleotides and it decreases the intracellular concentration of dUTP so that uracil cannot be incorporated into DNA.</text>
</comment>
<comment type="catalytic activity">
    <reaction evidence="1">
        <text>dUTP + H2O = dUMP + diphosphate + H(+)</text>
        <dbReference type="Rhea" id="RHEA:10248"/>
        <dbReference type="ChEBI" id="CHEBI:15377"/>
        <dbReference type="ChEBI" id="CHEBI:15378"/>
        <dbReference type="ChEBI" id="CHEBI:33019"/>
        <dbReference type="ChEBI" id="CHEBI:61555"/>
        <dbReference type="ChEBI" id="CHEBI:246422"/>
        <dbReference type="EC" id="3.6.1.23"/>
    </reaction>
</comment>
<comment type="cofactor">
    <cofactor evidence="1">
        <name>Mg(2+)</name>
        <dbReference type="ChEBI" id="CHEBI:18420"/>
    </cofactor>
</comment>
<comment type="pathway">
    <text evidence="1">Pyrimidine metabolism; dUMP biosynthesis; dUMP from dCTP (dUTP route): step 2/2.</text>
</comment>
<comment type="similarity">
    <text evidence="1">Belongs to the dUTPase family.</text>
</comment>
<sequence length="156" mass="17097">MGRIQRNKIKVEIKKLSHGKDLPLPCYATMQSAGMDLYAALGNSIVLNPLERLLIPTGIVIVIPNGFEGQIRPRSGLAAKYGITVLNSPGTIDSDYRGEVKVCLINLSNQPYEIKRGDRIAQILIAPVFRVIWDDAERLCTEETERSAGGFGSSGR</sequence>
<organism>
    <name type="scientific">Wolbachia sp. subsp. Brugia malayi (strain TRS)</name>
    <dbReference type="NCBI Taxonomy" id="292805"/>
    <lineage>
        <taxon>Bacteria</taxon>
        <taxon>Pseudomonadati</taxon>
        <taxon>Pseudomonadota</taxon>
        <taxon>Alphaproteobacteria</taxon>
        <taxon>Rickettsiales</taxon>
        <taxon>Anaplasmataceae</taxon>
        <taxon>Wolbachieae</taxon>
        <taxon>Wolbachia</taxon>
    </lineage>
</organism>
<feature type="chain" id="PRO_0000231435" description="Deoxyuridine 5'-triphosphate nucleotidohydrolase">
    <location>
        <begin position="1"/>
        <end position="156"/>
    </location>
</feature>
<feature type="binding site" evidence="1">
    <location>
        <begin position="74"/>
        <end position="76"/>
    </location>
    <ligand>
        <name>substrate</name>
    </ligand>
</feature>
<feature type="binding site" evidence="1">
    <location>
        <position position="87"/>
    </location>
    <ligand>
        <name>substrate</name>
    </ligand>
</feature>
<feature type="binding site" evidence="1">
    <location>
        <begin position="91"/>
        <end position="93"/>
    </location>
    <ligand>
        <name>substrate</name>
    </ligand>
</feature>
<feature type="binding site" evidence="1">
    <location>
        <position position="101"/>
    </location>
    <ligand>
        <name>substrate</name>
    </ligand>
</feature>
<reference key="1">
    <citation type="journal article" date="2005" name="PLoS Biol.">
        <title>The Wolbachia genome of Brugia malayi: endosymbiont evolution within a human pathogenic nematode.</title>
        <authorList>
            <person name="Foster J."/>
            <person name="Ganatra M."/>
            <person name="Kamal I."/>
            <person name="Ware J."/>
            <person name="Makarova K."/>
            <person name="Ivanova N."/>
            <person name="Bhattacharyya A."/>
            <person name="Kapatral V."/>
            <person name="Kumar S."/>
            <person name="Posfai J."/>
            <person name="Vincze T."/>
            <person name="Ingram J."/>
            <person name="Moran L."/>
            <person name="Lapidus A."/>
            <person name="Omelchenko M."/>
            <person name="Kyrpides N."/>
            <person name="Ghedin E."/>
            <person name="Wang S."/>
            <person name="Goltsman E."/>
            <person name="Joukov V."/>
            <person name="Ostrovskaya O."/>
            <person name="Tsukerman K."/>
            <person name="Mazur M."/>
            <person name="Comb D."/>
            <person name="Koonin E."/>
            <person name="Slatko B."/>
        </authorList>
    </citation>
    <scope>NUCLEOTIDE SEQUENCE [LARGE SCALE GENOMIC DNA]</scope>
    <source>
        <strain>TRS</strain>
    </source>
</reference>